<comment type="function">
    <text evidence="1 6 10 11 12">Probable E3 ubiquitin protein ligase involved in the proteasome-mediated ubiquitin-dependent degradation of target proteins (PubMed:29374064). Through the degradation of CTNNB1, functions downstream of FOXF2 to negatively regulate the Wnt signaling pathway (PubMed:29374064). Probably plays a role in the development of the central nervous system and in neuronal maintenance (Probable). Also acts as a transcriptional regulator of genes controlling female reproductive function. May play a role in gene transcription by transactivating GNRH1 promoter and repressing PENK promoter (By similarity).</text>
</comment>
<comment type="catalytic activity">
    <reaction evidence="11">
        <text>S-ubiquitinyl-[E2 ubiquitin-conjugating enzyme]-L-cysteine + [acceptor protein]-L-lysine = [E2 ubiquitin-conjugating enzyme]-L-cysteine + N(6)-ubiquitinyl-[acceptor protein]-L-lysine.</text>
        <dbReference type="EC" id="2.3.2.27"/>
    </reaction>
</comment>
<comment type="pathway">
    <text evidence="11">Protein modification; protein ubiquitination.</text>
</comment>
<comment type="subunit">
    <text evidence="6">Interacts with CTNNB1.</text>
</comment>
<comment type="subcellular location">
    <subcellularLocation>
        <location evidence="1">Nucleus</location>
    </subcellularLocation>
</comment>
<comment type="tissue specificity">
    <text evidence="4">Highly expressed in the heart, moderately in skeletal muscle and pancreas, and weakly in brain, kidney, liver, testis, thyroid gland and lymphocytes.</text>
</comment>
<comment type="polymorphism">
    <text evidence="4">The poly-Gln region is polymorphic; the most frequent allele contained 24 Gln. Stretches of 20-31 Gln are observed in healthy individuals.</text>
</comment>
<comment type="disease" evidence="7 8">
    <disease id="DI-05310">
        <name>Neurodevelopmental disorder with regression, abnormal movements, loss of speech, and seizures</name>
        <acronym>NEDAMSS</acronym>
        <description>An autosomal dominant disorder characterized by global developmental delay or neurodevelopmental regression, hypotonia, progressive ataxia, intellectual disability, seizures, and abnormal movements.</description>
        <dbReference type="MIM" id="618088"/>
    </disease>
    <text>The disease is caused by variants affecting the gene represented in this entry.</text>
</comment>
<comment type="similarity">
    <text evidence="9">Belongs to the IRF2BP family.</text>
</comment>
<comment type="sequence caution" evidence="9">
    <conflict type="miscellaneous discrepancy">
        <sequence resource="EMBL-CDS" id="BAB47494"/>
    </conflict>
    <text>Aberrant splicing.</text>
</comment>
<proteinExistence type="evidence at protein level"/>
<evidence type="ECO:0000250" key="1">
    <source>
        <dbReference type="UniProtKB" id="Q5EIC4"/>
    </source>
</evidence>
<evidence type="ECO:0000255" key="2"/>
<evidence type="ECO:0000256" key="3">
    <source>
        <dbReference type="SAM" id="MobiDB-lite"/>
    </source>
</evidence>
<evidence type="ECO:0000269" key="4">
    <source>
    </source>
</evidence>
<evidence type="ECO:0000269" key="5">
    <source>
    </source>
</evidence>
<evidence type="ECO:0000269" key="6">
    <source>
    </source>
</evidence>
<evidence type="ECO:0000269" key="7">
    <source>
    </source>
</evidence>
<evidence type="ECO:0000269" key="8">
    <source>
    </source>
</evidence>
<evidence type="ECO:0000305" key="9"/>
<evidence type="ECO:0000305" key="10">
    <source>
    </source>
</evidence>
<evidence type="ECO:0000305" key="11">
    <source>
    </source>
</evidence>
<evidence type="ECO:0000305" key="12">
    <source>
    </source>
</evidence>
<evidence type="ECO:0007744" key="13">
    <source>
    </source>
</evidence>
<evidence type="ECO:0007744" key="14">
    <source>
    </source>
</evidence>
<evidence type="ECO:0007744" key="15">
    <source>
    </source>
</evidence>
<evidence type="ECO:0007744" key="16">
    <source>
    </source>
</evidence>
<evidence type="ECO:0007744" key="17">
    <source>
    </source>
</evidence>
<evidence type="ECO:0007744" key="18">
    <source>
    </source>
</evidence>
<evidence type="ECO:0007744" key="19">
    <source>
    </source>
</evidence>
<evidence type="ECO:0007744" key="20">
    <source>
    </source>
</evidence>
<evidence type="ECO:0007829" key="21">
    <source>
        <dbReference type="PDB" id="2CS3"/>
    </source>
</evidence>
<keyword id="KW-0002">3D-structure</keyword>
<keyword id="KW-0175">Coiled coil</keyword>
<keyword id="KW-0225">Disease variant</keyword>
<keyword id="KW-0887">Epilepsy</keyword>
<keyword id="KW-0991">Intellectual disability</keyword>
<keyword id="KW-1017">Isopeptide bond</keyword>
<keyword id="KW-0479">Metal-binding</keyword>
<keyword id="KW-0539">Nucleus</keyword>
<keyword id="KW-0597">Phosphoprotein</keyword>
<keyword id="KW-1267">Proteomics identification</keyword>
<keyword id="KW-1185">Reference proteome</keyword>
<keyword id="KW-0808">Transferase</keyword>
<keyword id="KW-0818">Triplet repeat expansion</keyword>
<keyword id="KW-0832">Ubl conjugation</keyword>
<keyword id="KW-0862">Zinc</keyword>
<keyword id="KW-0863">Zinc-finger</keyword>
<accession>Q9H1B7</accession>
<accession>Q8NDQ2</accession>
<accession>Q96JG2</accession>
<accession>Q9H3I7</accession>
<name>I2BPL_HUMAN</name>
<sequence length="796" mass="82659">MSAAQVSSSRRQSCYLCDLPRMPWAMIWDFSEPVCRGCVNYEGADRIEFVIETARQLKRAHGCFQDGRSPGPPPPVGVKTVALSAKEAAAAAAAAAAAAAAAQQQQQQQQQQQQQQQQQQQQQQQQQLNHVDGSSKPAVLAAPSGLERYGLSAAAAAAAAAAAAVEQRSRFEYPPPPVSLGSSSHTARLPNGLGGPNGFPKPTPEEGPPELNRQSPNSSSAAASVASRRGTHGGLVTGLPNPGGGGGPQLTVPPNLLPQTLLNGPASAAVLPPPPPHALGSRGPPTPAPPGAPGGPACLGGTPGVSATSSSASSSTSSSVAEVGVGAGGKRPGSVSSTDQERELKEKQRNAEALAELSESLRNRAEEWASKPKMVRDTLLTLAGCTPYEVRFKKDHSLLGRVFAFDAVSKPGMDYELKLFIEYPTGSGNVYSSASGVAKQMYQDCMKDFGRGLSSGFKYLEYEKKHGSGDWRLLGDLLPEAVRFFKEGVPGADMLPQPYLDASCPMLPTALVSLSRAPSAPPGTGALPPAAPSGRGAAASLRKRKASPEPPDSAEGALKLGEEQQRQQWMANQSEALKLTMSAGGFAAPGHAAGGPPPPPPPLGPHSNRTTPPESAPQNGPSPMAALMSVADTLGTAHSPKDGSSVHSTTASARRNSSSPVSPASVPGQRRLASRNGDLNLQVAPPPPSAHPGMDQVHPQNIPDSPMANSGPLCCTICHERLEDTHFVQCPSVPSHKFCFPCSRESIKAQGATGEVYCPSGEKCPLVGSNVPWAFMQGEIATILAGDVKVKKERDP</sequence>
<feature type="chain" id="PRO_0000056411" description="Probable E3 ubiquitin-protein ligase IRF2BPL">
    <location>
        <begin position="1"/>
        <end position="796"/>
    </location>
</feature>
<feature type="zinc finger region" description="RING-type; degenerate">
    <location>
        <begin position="715"/>
        <end position="762"/>
    </location>
</feature>
<feature type="region of interest" description="Disordered" evidence="3">
    <location>
        <begin position="174"/>
        <end position="345"/>
    </location>
</feature>
<feature type="region of interest" description="Disordered" evidence="3">
    <location>
        <begin position="515"/>
        <end position="556"/>
    </location>
</feature>
<feature type="region of interest" description="Disordered" evidence="3">
    <location>
        <begin position="585"/>
        <end position="698"/>
    </location>
</feature>
<feature type="coiled-coil region" evidence="2">
    <location>
        <begin position="85"/>
        <end position="132"/>
    </location>
</feature>
<feature type="coiled-coil region" evidence="2">
    <location>
        <begin position="335"/>
        <end position="371"/>
    </location>
</feature>
<feature type="compositionally biased region" description="Low complexity" evidence="3">
    <location>
        <begin position="218"/>
        <end position="227"/>
    </location>
</feature>
<feature type="compositionally biased region" description="Gly residues" evidence="3">
    <location>
        <begin position="232"/>
        <end position="248"/>
    </location>
</feature>
<feature type="compositionally biased region" description="Pro residues" evidence="3">
    <location>
        <begin position="284"/>
        <end position="293"/>
    </location>
</feature>
<feature type="compositionally biased region" description="Low complexity" evidence="3">
    <location>
        <begin position="304"/>
        <end position="324"/>
    </location>
</feature>
<feature type="compositionally biased region" description="Low complexity" evidence="3">
    <location>
        <begin position="522"/>
        <end position="540"/>
    </location>
</feature>
<feature type="compositionally biased region" description="Pro residues" evidence="3">
    <location>
        <begin position="595"/>
        <end position="604"/>
    </location>
</feature>
<feature type="compositionally biased region" description="Polar residues" evidence="3">
    <location>
        <begin position="607"/>
        <end position="621"/>
    </location>
</feature>
<feature type="compositionally biased region" description="Low complexity" evidence="3">
    <location>
        <begin position="648"/>
        <end position="667"/>
    </location>
</feature>
<feature type="modified residue" description="Phosphoserine" evidence="18">
    <location>
        <position position="69"/>
    </location>
</feature>
<feature type="modified residue" description="Phosphoserine" evidence="19">
    <location>
        <position position="215"/>
    </location>
</feature>
<feature type="modified residue" description="Phosphoserine" evidence="18 19">
    <location>
        <position position="519"/>
    </location>
</feature>
<feature type="modified residue" description="Phosphoserine" evidence="15 16 17 18 19">
    <location>
        <position position="547"/>
    </location>
</feature>
<feature type="modified residue" description="Phosphoserine" evidence="18">
    <location>
        <position position="639"/>
    </location>
</feature>
<feature type="modified residue" description="Phosphoserine" evidence="15 16 18 19">
    <location>
        <position position="657"/>
    </location>
</feature>
<feature type="modified residue" description="Phosphoserine" evidence="15">
    <location>
        <position position="658"/>
    </location>
</feature>
<feature type="modified residue" description="Phosphoserine" evidence="15 16 17 18 19">
    <location>
        <position position="659"/>
    </location>
</feature>
<feature type="modified residue" description="Phosphoserine" evidence="13 14 15 16 17 18 19">
    <location>
        <position position="662"/>
    </location>
</feature>
<feature type="cross-link" description="Glycyl lysine isopeptide (Lys-Gly) (interchain with G-Cter in SUMO2)" evidence="20">
    <location>
        <position position="79"/>
    </location>
</feature>
<feature type="sequence variant" id="VAR_081415" description="In NEDAMSS." evidence="7">
    <location>
        <begin position="126"/>
        <end position="796"/>
    </location>
</feature>
<feature type="sequence variant" id="VAR_081416" description="In NEDAMSS; loss of function." evidence="7">
    <location>
        <begin position="127"/>
        <end position="796"/>
    </location>
</feature>
<feature type="sequence variant" id="VAR_081417" description="In NEDAMSS; loss of function." evidence="7">
    <location>
        <begin position="172"/>
        <end position="796"/>
    </location>
</feature>
<feature type="sequence variant" id="VAR_081418" description="In NEDAMSS; loss of function." evidence="7">
    <location>
        <begin position="188"/>
        <end position="796"/>
    </location>
</feature>
<feature type="sequence variant" id="VAR_081419" description="In NEDAMSS; uncertain significance; dbSNP:rs770422700." evidence="7">
    <original>G</original>
    <variation>V</variation>
    <location>
        <position position="195"/>
    </location>
</feature>
<feature type="sequence variant" id="VAR_081420" description="In NEDAMSS; uncertain significance; no effect on function; dbSNP:rs1555377336." evidence="7">
    <original>P</original>
    <variation>R</variation>
    <location>
        <position position="372"/>
    </location>
</feature>
<feature type="sequence variant" id="VAR_081421" description="In NEDAMSS; loss of function; dbSNP:rs201073695." evidence="7">
    <original>K</original>
    <variation>N</variation>
    <location>
        <position position="418"/>
    </location>
</feature>
<feature type="mutagenesis site" description="Loss of transcription activity." evidence="5">
    <original>C</original>
    <variation>A</variation>
    <location>
        <position position="715"/>
    </location>
</feature>
<feature type="strand" evidence="21">
    <location>
        <begin position="716"/>
        <end position="718"/>
    </location>
</feature>
<feature type="strand" evidence="21">
    <location>
        <begin position="727"/>
        <end position="729"/>
    </location>
</feature>
<feature type="helix" evidence="21">
    <location>
        <begin position="740"/>
        <end position="751"/>
    </location>
</feature>
<feature type="strand" evidence="21">
    <location>
        <begin position="752"/>
        <end position="754"/>
    </location>
</feature>
<feature type="strand" evidence="21">
    <location>
        <begin position="767"/>
        <end position="772"/>
    </location>
</feature>
<feature type="helix" evidence="21">
    <location>
        <begin position="777"/>
        <end position="784"/>
    </location>
</feature>
<reference key="1">
    <citation type="journal article" date="2000" name="Biochem. Biophys. Res. Commun.">
        <title>Characterization of C14orf4, a novel intronless human gene containing a polyglutamine repeat, mapped to the ARVD1 critical region.</title>
        <authorList>
            <person name="Rampazzo A."/>
            <person name="Pivotto F."/>
            <person name="Occhi G."/>
            <person name="Tiso N."/>
            <person name="Bortoluzzi S."/>
            <person name="Rowen L."/>
            <person name="Hood L."/>
            <person name="Nava A."/>
            <person name="Danieli G.A."/>
        </authorList>
    </citation>
    <scope>NUCLEOTIDE SEQUENCE [GENOMIC DNA]</scope>
    <scope>TISSUE SPECIFICITY</scope>
    <scope>TRIPLET REPEAT EXPANSION</scope>
    <scope>POLYMORPHISM</scope>
</reference>
<reference key="2">
    <citation type="journal article" date="2003" name="Nature">
        <title>The DNA sequence and analysis of human chromosome 14.</title>
        <authorList>
            <person name="Heilig R."/>
            <person name="Eckenberg R."/>
            <person name="Petit J.-L."/>
            <person name="Fonknechten N."/>
            <person name="Da Silva C."/>
            <person name="Cattolico L."/>
            <person name="Levy M."/>
            <person name="Barbe V."/>
            <person name="De Berardinis V."/>
            <person name="Ureta-Vidal A."/>
            <person name="Pelletier E."/>
            <person name="Vico V."/>
            <person name="Anthouard V."/>
            <person name="Rowen L."/>
            <person name="Madan A."/>
            <person name="Qin S."/>
            <person name="Sun H."/>
            <person name="Du H."/>
            <person name="Pepin K."/>
            <person name="Artiguenave F."/>
            <person name="Robert C."/>
            <person name="Cruaud C."/>
            <person name="Bruels T."/>
            <person name="Jaillon O."/>
            <person name="Friedlander L."/>
            <person name="Samson G."/>
            <person name="Brottier P."/>
            <person name="Cure S."/>
            <person name="Segurens B."/>
            <person name="Aniere F."/>
            <person name="Samain S."/>
            <person name="Crespeau H."/>
            <person name="Abbasi N."/>
            <person name="Aiach N."/>
            <person name="Boscus D."/>
            <person name="Dickhoff R."/>
            <person name="Dors M."/>
            <person name="Dubois I."/>
            <person name="Friedman C."/>
            <person name="Gouyvenoux M."/>
            <person name="James R."/>
            <person name="Madan A."/>
            <person name="Mairey-Estrada B."/>
            <person name="Mangenot S."/>
            <person name="Martins N."/>
            <person name="Menard M."/>
            <person name="Oztas S."/>
            <person name="Ratcliffe A."/>
            <person name="Shaffer T."/>
            <person name="Trask B."/>
            <person name="Vacherie B."/>
            <person name="Bellemere C."/>
            <person name="Belser C."/>
            <person name="Besnard-Gonnet M."/>
            <person name="Bartol-Mavel D."/>
            <person name="Boutard M."/>
            <person name="Briez-Silla S."/>
            <person name="Combette S."/>
            <person name="Dufosse-Laurent V."/>
            <person name="Ferron C."/>
            <person name="Lechaplais C."/>
            <person name="Louesse C."/>
            <person name="Muselet D."/>
            <person name="Magdelenat G."/>
            <person name="Pateau E."/>
            <person name="Petit E."/>
            <person name="Sirvain-Trukniewicz P."/>
            <person name="Trybou A."/>
            <person name="Vega-Czarny N."/>
            <person name="Bataille E."/>
            <person name="Bluet E."/>
            <person name="Bordelais I."/>
            <person name="Dubois M."/>
            <person name="Dumont C."/>
            <person name="Guerin T."/>
            <person name="Haffray S."/>
            <person name="Hammadi R."/>
            <person name="Muanga J."/>
            <person name="Pellouin V."/>
            <person name="Robert D."/>
            <person name="Wunderle E."/>
            <person name="Gauguet G."/>
            <person name="Roy A."/>
            <person name="Sainte-Marthe L."/>
            <person name="Verdier J."/>
            <person name="Verdier-Discala C."/>
            <person name="Hillier L.W."/>
            <person name="Fulton L."/>
            <person name="McPherson J."/>
            <person name="Matsuda F."/>
            <person name="Wilson R."/>
            <person name="Scarpelli C."/>
            <person name="Gyapay G."/>
            <person name="Wincker P."/>
            <person name="Saurin W."/>
            <person name="Quetier F."/>
            <person name="Waterston R."/>
            <person name="Hood L."/>
            <person name="Weissenbach J."/>
        </authorList>
    </citation>
    <scope>NUCLEOTIDE SEQUENCE [LARGE SCALE GENOMIC DNA]</scope>
</reference>
<reference key="3">
    <citation type="journal article" date="2001" name="DNA Res.">
        <title>Prediction of the coding sequences of unidentified human genes. XX. The complete sequences of 100 new cDNA clones from brain which code for large proteins in vitro.</title>
        <authorList>
            <person name="Nagase T."/>
            <person name="Nakayama M."/>
            <person name="Nakajima D."/>
            <person name="Kikuno R."/>
            <person name="Ohara O."/>
        </authorList>
    </citation>
    <scope>NUCLEOTIDE SEQUENCE [LARGE SCALE MRNA]</scope>
    <source>
        <tissue>Brain</tissue>
    </source>
</reference>
<reference key="4">
    <citation type="journal article" date="2007" name="BMC Genomics">
        <title>The full-ORF clone resource of the German cDNA consortium.</title>
        <authorList>
            <person name="Bechtel S."/>
            <person name="Rosenfelder H."/>
            <person name="Duda A."/>
            <person name="Schmidt C.P."/>
            <person name="Ernst U."/>
            <person name="Wellenreuther R."/>
            <person name="Mehrle A."/>
            <person name="Schuster C."/>
            <person name="Bahr A."/>
            <person name="Bloecker H."/>
            <person name="Heubner D."/>
            <person name="Hoerlein A."/>
            <person name="Michel G."/>
            <person name="Wedler H."/>
            <person name="Koehrer K."/>
            <person name="Ottenwaelder B."/>
            <person name="Poustka A."/>
            <person name="Wiemann S."/>
            <person name="Schupp I."/>
        </authorList>
    </citation>
    <scope>NUCLEOTIDE SEQUENCE [LARGE SCALE MRNA] OF 332-796</scope>
    <source>
        <tissue>Fetal brain</tissue>
    </source>
</reference>
<reference key="5">
    <citation type="submission" date="1998-05" db="EMBL/GenBank/DDBJ databases">
        <authorList>
            <person name="Mao Y.M."/>
            <person name="Xie Y."/>
            <person name="Zheng Z.H."/>
        </authorList>
    </citation>
    <scope>NUCLEOTIDE SEQUENCE [LARGE SCALE MRNA] OF 694-796</scope>
    <source>
        <tissue>Fetal brain</tissue>
    </source>
</reference>
<reference key="6">
    <citation type="journal article" date="2006" name="Cell">
        <title>Global, in vivo, and site-specific phosphorylation dynamics in signaling networks.</title>
        <authorList>
            <person name="Olsen J.V."/>
            <person name="Blagoev B."/>
            <person name="Gnad F."/>
            <person name="Macek B."/>
            <person name="Kumar C."/>
            <person name="Mortensen P."/>
            <person name="Mann M."/>
        </authorList>
    </citation>
    <scope>IDENTIFICATION BY MASS SPECTROMETRY [LARGE SCALE ANALYSIS]</scope>
    <source>
        <tissue>Cervix carcinoma</tissue>
    </source>
</reference>
<reference key="7">
    <citation type="journal article" date="2006" name="Nat. Biotechnol.">
        <title>A probability-based approach for high-throughput protein phosphorylation analysis and site localization.</title>
        <authorList>
            <person name="Beausoleil S.A."/>
            <person name="Villen J."/>
            <person name="Gerber S.A."/>
            <person name="Rush J."/>
            <person name="Gygi S.P."/>
        </authorList>
    </citation>
    <scope>PHOSPHORYLATION [LARGE SCALE ANALYSIS] AT SER-662</scope>
    <scope>IDENTIFICATION BY MASS SPECTROMETRY [LARGE SCALE ANALYSIS]</scope>
    <source>
        <tissue>Cervix carcinoma</tissue>
    </source>
</reference>
<reference key="8">
    <citation type="journal article" date="2007" name="J. Clin. Invest.">
        <title>Enhanced at puberty 1 (EAP1) is a new transcriptional regulator of the female neuroendocrine reproductive axis.</title>
        <authorList>
            <person name="Heger S."/>
            <person name="Mastronardi C."/>
            <person name="Dissen G.A."/>
            <person name="Lomniczi A."/>
            <person name="Cabrera R."/>
            <person name="Roth C.L."/>
            <person name="Jung H."/>
            <person name="Galimi F."/>
            <person name="Sippell W."/>
            <person name="Ojeda S.R."/>
        </authorList>
    </citation>
    <scope>MUTAGENESIS OF CYS-715</scope>
</reference>
<reference key="9">
    <citation type="journal article" date="2008" name="J. Proteome Res.">
        <title>Combining protein-based IMAC, peptide-based IMAC, and MudPIT for efficient phosphoproteomic analysis.</title>
        <authorList>
            <person name="Cantin G.T."/>
            <person name="Yi W."/>
            <person name="Lu B."/>
            <person name="Park S.K."/>
            <person name="Xu T."/>
            <person name="Lee J.-D."/>
            <person name="Yates J.R. III"/>
        </authorList>
    </citation>
    <scope>PHOSPHORYLATION [LARGE SCALE ANALYSIS] AT SER-662</scope>
    <scope>IDENTIFICATION BY MASS SPECTROMETRY [LARGE SCALE ANALYSIS]</scope>
    <source>
        <tissue>Cervix carcinoma</tissue>
    </source>
</reference>
<reference key="10">
    <citation type="journal article" date="2008" name="Proc. Natl. Acad. Sci. U.S.A.">
        <title>A quantitative atlas of mitotic phosphorylation.</title>
        <authorList>
            <person name="Dephoure N."/>
            <person name="Zhou C."/>
            <person name="Villen J."/>
            <person name="Beausoleil S.A."/>
            <person name="Bakalarski C.E."/>
            <person name="Elledge S.J."/>
            <person name="Gygi S.P."/>
        </authorList>
    </citation>
    <scope>PHOSPHORYLATION [LARGE SCALE ANALYSIS] AT SER-547; SER-657; SER-658; SER-659 AND SER-662</scope>
    <scope>IDENTIFICATION BY MASS SPECTROMETRY [LARGE SCALE ANALYSIS]</scope>
    <source>
        <tissue>Cervix carcinoma</tissue>
    </source>
</reference>
<reference key="11">
    <citation type="journal article" date="2009" name="Anal. Chem.">
        <title>Lys-N and trypsin cover complementary parts of the phosphoproteome in a refined SCX-based approach.</title>
        <authorList>
            <person name="Gauci S."/>
            <person name="Helbig A.O."/>
            <person name="Slijper M."/>
            <person name="Krijgsveld J."/>
            <person name="Heck A.J."/>
            <person name="Mohammed S."/>
        </authorList>
    </citation>
    <scope>IDENTIFICATION BY MASS SPECTROMETRY [LARGE SCALE ANALYSIS]</scope>
</reference>
<reference key="12">
    <citation type="journal article" date="2009" name="Sci. Signal.">
        <title>Quantitative phosphoproteomic analysis of T cell receptor signaling reveals system-wide modulation of protein-protein interactions.</title>
        <authorList>
            <person name="Mayya V."/>
            <person name="Lundgren D.H."/>
            <person name="Hwang S.-I."/>
            <person name="Rezaul K."/>
            <person name="Wu L."/>
            <person name="Eng J.K."/>
            <person name="Rodionov V."/>
            <person name="Han D.K."/>
        </authorList>
    </citation>
    <scope>PHOSPHORYLATION [LARGE SCALE ANALYSIS] AT SER-547; SER-657; SER-659 AND SER-662</scope>
    <scope>IDENTIFICATION BY MASS SPECTROMETRY [LARGE SCALE ANALYSIS]</scope>
    <source>
        <tissue>Leukemic T-cell</tissue>
    </source>
</reference>
<reference key="13">
    <citation type="journal article" date="2010" name="Sci. Signal.">
        <title>Quantitative phosphoproteomics reveals widespread full phosphorylation site occupancy during mitosis.</title>
        <authorList>
            <person name="Olsen J.V."/>
            <person name="Vermeulen M."/>
            <person name="Santamaria A."/>
            <person name="Kumar C."/>
            <person name="Miller M.L."/>
            <person name="Jensen L.J."/>
            <person name="Gnad F."/>
            <person name="Cox J."/>
            <person name="Jensen T.S."/>
            <person name="Nigg E.A."/>
            <person name="Brunak S."/>
            <person name="Mann M."/>
        </authorList>
    </citation>
    <scope>IDENTIFICATION BY MASS SPECTROMETRY [LARGE SCALE ANALYSIS]</scope>
    <source>
        <tissue>Cervix carcinoma</tissue>
    </source>
</reference>
<reference key="14">
    <citation type="journal article" date="2011" name="BMC Syst. Biol.">
        <title>Initial characterization of the human central proteome.</title>
        <authorList>
            <person name="Burkard T.R."/>
            <person name="Planyavsky M."/>
            <person name="Kaupe I."/>
            <person name="Breitwieser F.P."/>
            <person name="Buerckstuemmer T."/>
            <person name="Bennett K.L."/>
            <person name="Superti-Furga G."/>
            <person name="Colinge J."/>
        </authorList>
    </citation>
    <scope>IDENTIFICATION BY MASS SPECTROMETRY [LARGE SCALE ANALYSIS]</scope>
</reference>
<reference key="15">
    <citation type="journal article" date="2011" name="Sci. Signal.">
        <title>System-wide temporal characterization of the proteome and phosphoproteome of human embryonic stem cell differentiation.</title>
        <authorList>
            <person name="Rigbolt K.T."/>
            <person name="Prokhorova T.A."/>
            <person name="Akimov V."/>
            <person name="Henningsen J."/>
            <person name="Johansen P.T."/>
            <person name="Kratchmarova I."/>
            <person name="Kassem M."/>
            <person name="Mann M."/>
            <person name="Olsen J.V."/>
            <person name="Blagoev B."/>
        </authorList>
    </citation>
    <scope>PHOSPHORYLATION [LARGE SCALE ANALYSIS] AT SER-547; SER-659 AND SER-662</scope>
    <scope>IDENTIFICATION BY MASS SPECTROMETRY [LARGE SCALE ANALYSIS]</scope>
</reference>
<reference key="16">
    <citation type="journal article" date="2013" name="J. Proteome Res.">
        <title>Toward a comprehensive characterization of a human cancer cell phosphoproteome.</title>
        <authorList>
            <person name="Zhou H."/>
            <person name="Di Palma S."/>
            <person name="Preisinger C."/>
            <person name="Peng M."/>
            <person name="Polat A.N."/>
            <person name="Heck A.J."/>
            <person name="Mohammed S."/>
        </authorList>
    </citation>
    <scope>PHOSPHORYLATION [LARGE SCALE ANALYSIS] AT SER-69; SER-519; SER-547; SER-639; SER-657; SER-659 AND SER-662</scope>
    <scope>IDENTIFICATION BY MASS SPECTROMETRY [LARGE SCALE ANALYSIS]</scope>
    <source>
        <tissue>Cervix carcinoma</tissue>
        <tissue>Erythroleukemia</tissue>
    </source>
</reference>
<reference key="17">
    <citation type="journal article" date="2014" name="J. Proteomics">
        <title>An enzyme assisted RP-RPLC approach for in-depth analysis of human liver phosphoproteome.</title>
        <authorList>
            <person name="Bian Y."/>
            <person name="Song C."/>
            <person name="Cheng K."/>
            <person name="Dong M."/>
            <person name="Wang F."/>
            <person name="Huang J."/>
            <person name="Sun D."/>
            <person name="Wang L."/>
            <person name="Ye M."/>
            <person name="Zou H."/>
        </authorList>
    </citation>
    <scope>PHOSPHORYLATION [LARGE SCALE ANALYSIS] AT SER-215; SER-519; SER-547; SER-657; SER-659 AND SER-662</scope>
    <scope>IDENTIFICATION BY MASS SPECTROMETRY [LARGE SCALE ANALYSIS]</scope>
    <source>
        <tissue>Liver</tissue>
    </source>
</reference>
<reference key="18">
    <citation type="journal article" date="2017" name="Nat. Struct. Mol. Biol.">
        <title>Site-specific mapping of the human SUMO proteome reveals co-modification with phosphorylation.</title>
        <authorList>
            <person name="Hendriks I.A."/>
            <person name="Lyon D."/>
            <person name="Young C."/>
            <person name="Jensen L.J."/>
            <person name="Vertegaal A.C."/>
            <person name="Nielsen M.L."/>
        </authorList>
    </citation>
    <scope>SUMOYLATION [LARGE SCALE ANALYSIS] AT LYS-79</scope>
    <scope>IDENTIFICATION BY MASS SPECTROMETRY [LARGE SCALE ANALYSIS]</scope>
</reference>
<reference key="19">
    <citation type="journal article" date="2018" name="Am. J. Hum. Genet.">
        <title>IRF2BPL Is Associated with Neurological Phenotypes.</title>
        <authorList>
            <consortium name="Program for Undiagnosed Diseases (UD-PrOZA)"/>
            <consortium name="Undiagnosed Diseases Network"/>
            <person name="Marcogliese P.C."/>
            <person name="Shashi V."/>
            <person name="Spillmann R.C."/>
            <person name="Stong N."/>
            <person name="Rosenfeld J.A."/>
            <person name="Koenig M.K."/>
            <person name="Martinez-Agosto J.A."/>
            <person name="Herzog M."/>
            <person name="Chen A.H."/>
            <person name="Dickson P.I."/>
            <person name="Lin H.J."/>
            <person name="Vera M.U."/>
            <person name="Salamon N."/>
            <person name="Graham J.M. Jr."/>
            <person name="Ortiz D."/>
            <person name="Infante E."/>
            <person name="Steyaert W."/>
            <person name="Dermaut B."/>
            <person name="Poppe B."/>
            <person name="Chung H.L."/>
            <person name="Zuo Z."/>
            <person name="Lee P.T."/>
            <person name="Kanca O."/>
            <person name="Xia F."/>
            <person name="Yang Y."/>
            <person name="Smith E.C."/>
            <person name="Jasien J."/>
            <person name="Kansagra S."/>
            <person name="Spiridigliozzi G."/>
            <person name="El-Dairi M."/>
            <person name="Lark R."/>
            <person name="Riley K."/>
            <person name="Koeberl D.D."/>
            <person name="Golden-Grant K."/>
            <person name="Yamamoto S."/>
            <person name="Wangler M.F."/>
            <person name="Mirzaa G."/>
            <person name="Hemelsoet D."/>
            <person name="Lee B."/>
            <person name="Nelson S.F."/>
            <person name="Goldstein D.B."/>
            <person name="Bellen H.J."/>
            <person name="Pena L.D.M."/>
        </authorList>
    </citation>
    <scope>FUNCTION</scope>
    <scope>INVOLVEMENT IN NEDAMSS</scope>
    <scope>VARIANTS NEDAMSS 126-GLN--PRO-796 DEL; 127-GLN--PRO-796 DEL; 172-GLU--PRO-796 DEL; 188-ARG--PRO-796 DEL; VAL-195; ARG-372 AND ASN-418</scope>
    <scope>CHARACTERIZATION OF VARIANTS NEDAMSS 127-GLN--PRO-796 DEL; 172-GLU--PRO-796 DEL; 188-ARG--PRO-796 DEL; ARG-372 AND ASN-418</scope>
</reference>
<reference key="20">
    <citation type="journal article" date="2018" name="Cancer Res.">
        <title>Forkhead Box F2 Suppresses Gastric Cancer through a Novel FOXF2-IRF2BPL-beta-Catenin Signaling Axis.</title>
        <authorList>
            <person name="Higashimori A."/>
            <person name="Dong Y."/>
            <person name="Zhang Y."/>
            <person name="Kang W."/>
            <person name="Nakatsu G."/>
            <person name="Ng S.S.M."/>
            <person name="Arakawa T."/>
            <person name="Sung J.J.Y."/>
            <person name="Chan F.K.L."/>
            <person name="Yu J."/>
        </authorList>
    </citation>
    <scope>FUNCTION</scope>
    <scope>INTERACTION WITH CTNNB1</scope>
</reference>
<reference key="21">
    <citation type="journal article" date="2019" name="Genet. Med.">
        <title>De novo truncating variants in the intronless IRF2BPL are responsible for developmental epileptic encephalopathy.</title>
        <authorList>
            <person name="Tran Mau-Them F."/>
            <person name="Guibaud L."/>
            <person name="Duplomb L."/>
            <person name="Keren B."/>
            <person name="Lindstrom K."/>
            <person name="Marey I."/>
            <person name="Mochel F."/>
            <person name="van den Boogaard M.J."/>
            <person name="Oegema R."/>
            <person name="Nava C."/>
            <person name="Masurel A."/>
            <person name="Jouan T."/>
            <person name="Jansen F.E."/>
            <person name="Au M."/>
            <person name="Chen A.H."/>
            <person name="Cho M."/>
            <person name="Duffourd Y."/>
            <person name="Lozier E."/>
            <person name="Konovalov F."/>
            <person name="Sharkov A."/>
            <person name="Korostelev S."/>
            <person name="Urteaga B."/>
            <person name="Dickson P."/>
            <person name="Vera M."/>
            <person name="Martinez-Agosto J.A."/>
            <person name="Begemann A."/>
            <person name="Zweier M."/>
            <person name="Schmitt-Mechelke T."/>
            <person name="Rauch A."/>
            <person name="Philippe C."/>
            <person name="van Gassen K."/>
            <person name="Nelson S."/>
            <person name="Graham J.M. Jr."/>
            <person name="Friedman J."/>
            <person name="Faivre L."/>
            <person name="Lin H.J."/>
            <person name="Thauvin-Robinet C."/>
            <person name="Vitobello A."/>
        </authorList>
    </citation>
    <scope>INVOLVEMENT IN NEDAMSS</scope>
</reference>
<reference key="22">
    <citation type="submission" date="2005-11" db="PDB data bank">
        <title>Solution structure of the ZF-C3HC4 domain of human KIAA1865.</title>
        <authorList>
            <consortium name="RIKEN structural genomics initiative (RSGI)"/>
        </authorList>
    </citation>
    <scope>STRUCTURE BY NMR OF 705-786</scope>
</reference>
<reference key="23">
    <citation type="journal article" date="2007" name="Braz. J. Med. Biol. Res.">
        <title>In silico analysis identifies a C3HC4-RING finger domain of a putative E3 ubiquitin-protein ligase located at the C-terminus of a polyglutamine-containing protein.</title>
        <authorList>
            <person name="Scior T."/>
            <person name="Luna F."/>
            <person name="Koch W."/>
            <person name="Sanchez-Ruiz J.F."/>
        </authorList>
    </citation>
    <scope>3D-STRUCTURE MODELING OF 708-771</scope>
    <scope>RING FINGER</scope>
</reference>
<gene>
    <name type="primary">IRF2BPL</name>
    <name type="synonym">C14orf4</name>
    <name type="synonym">EAP1</name>
    <name type="synonym">KIAA1865</name>
    <name type="ORF">My039</name>
</gene>
<protein>
    <recommendedName>
        <fullName evidence="9">Probable E3 ubiquitin-protein ligase IRF2BPL</fullName>
        <ecNumber evidence="11">2.3.2.27</ecNumber>
    </recommendedName>
    <alternativeName>
        <fullName>Enhanced at puberty protein 1</fullName>
    </alternativeName>
    <alternativeName>
        <fullName>Interferon regulatory factor 2-binding protein-like</fullName>
    </alternativeName>
</protein>
<organism>
    <name type="scientific">Homo sapiens</name>
    <name type="common">Human</name>
    <dbReference type="NCBI Taxonomy" id="9606"/>
    <lineage>
        <taxon>Eukaryota</taxon>
        <taxon>Metazoa</taxon>
        <taxon>Chordata</taxon>
        <taxon>Craniata</taxon>
        <taxon>Vertebrata</taxon>
        <taxon>Euteleostomi</taxon>
        <taxon>Mammalia</taxon>
        <taxon>Eutheria</taxon>
        <taxon>Euarchontoglires</taxon>
        <taxon>Primates</taxon>
        <taxon>Haplorrhini</taxon>
        <taxon>Catarrhini</taxon>
        <taxon>Hominidae</taxon>
        <taxon>Homo</taxon>
    </lineage>
</organism>
<dbReference type="EC" id="2.3.2.27" evidence="11"/>
<dbReference type="EMBL" id="AJ277365">
    <property type="protein sequence ID" value="CAC10539.1"/>
    <property type="molecule type" value="Genomic_DNA"/>
</dbReference>
<dbReference type="EMBL" id="AC007686">
    <property type="status" value="NOT_ANNOTATED_CDS"/>
    <property type="molecule type" value="Genomic_DNA"/>
</dbReference>
<dbReference type="EMBL" id="AB058768">
    <property type="protein sequence ID" value="BAB47494.1"/>
    <property type="status" value="ALT_SEQ"/>
    <property type="molecule type" value="mRNA"/>
</dbReference>
<dbReference type="EMBL" id="AL832320">
    <property type="protein sequence ID" value="CAD38615.1"/>
    <property type="molecule type" value="mRNA"/>
</dbReference>
<dbReference type="EMBL" id="AF063597">
    <property type="protein sequence ID" value="AAG43156.1"/>
    <property type="molecule type" value="mRNA"/>
</dbReference>
<dbReference type="CCDS" id="CCDS9854.1"/>
<dbReference type="PIR" id="JC7555">
    <property type="entry name" value="JC7555"/>
</dbReference>
<dbReference type="RefSeq" id="NP_078772.1">
    <property type="nucleotide sequence ID" value="NM_024496.4"/>
</dbReference>
<dbReference type="PDB" id="2CS3">
    <property type="method" value="NMR"/>
    <property type="chains" value="A=705-784"/>
</dbReference>
<dbReference type="PDBsum" id="2CS3"/>
<dbReference type="SMR" id="Q9H1B7"/>
<dbReference type="BioGRID" id="122101">
    <property type="interactions" value="56"/>
</dbReference>
<dbReference type="CORUM" id="Q9H1B7"/>
<dbReference type="FunCoup" id="Q9H1B7">
    <property type="interactions" value="2211"/>
</dbReference>
<dbReference type="IntAct" id="Q9H1B7">
    <property type="interactions" value="16"/>
</dbReference>
<dbReference type="MINT" id="Q9H1B7"/>
<dbReference type="STRING" id="9606.ENSP00000238647"/>
<dbReference type="GlyCosmos" id="Q9H1B7">
    <property type="glycosylation" value="11 sites, 2 glycans"/>
</dbReference>
<dbReference type="GlyGen" id="Q9H1B7">
    <property type="glycosylation" value="18 sites, 1 N-linked glycan (1 site), 2 O-linked glycans (16 sites)"/>
</dbReference>
<dbReference type="iPTMnet" id="Q9H1B7"/>
<dbReference type="PhosphoSitePlus" id="Q9H1B7"/>
<dbReference type="SwissPalm" id="Q9H1B7"/>
<dbReference type="BioMuta" id="IRF2BPL"/>
<dbReference type="DMDM" id="34395562"/>
<dbReference type="jPOST" id="Q9H1B7"/>
<dbReference type="MassIVE" id="Q9H1B7"/>
<dbReference type="PaxDb" id="9606-ENSP00000238647"/>
<dbReference type="PeptideAtlas" id="Q9H1B7"/>
<dbReference type="ProteomicsDB" id="80395"/>
<dbReference type="Pumba" id="Q9H1B7"/>
<dbReference type="Antibodypedia" id="54435">
    <property type="antibodies" value="11 antibodies from 7 providers"/>
</dbReference>
<dbReference type="DNASU" id="64207"/>
<dbReference type="Ensembl" id="ENST00000238647.5">
    <property type="protein sequence ID" value="ENSP00000238647.3"/>
    <property type="gene ID" value="ENSG00000119669.5"/>
</dbReference>
<dbReference type="GeneID" id="64207"/>
<dbReference type="KEGG" id="hsa:64207"/>
<dbReference type="MANE-Select" id="ENST00000238647.5">
    <property type="protein sequence ID" value="ENSP00000238647.3"/>
    <property type="RefSeq nucleotide sequence ID" value="NM_024496.4"/>
    <property type="RefSeq protein sequence ID" value="NP_078772.1"/>
</dbReference>
<dbReference type="UCSC" id="uc001xsy.4">
    <property type="organism name" value="human"/>
</dbReference>
<dbReference type="AGR" id="HGNC:14282"/>
<dbReference type="CTD" id="64207"/>
<dbReference type="DisGeNET" id="64207"/>
<dbReference type="GeneCards" id="IRF2BPL"/>
<dbReference type="GeneReviews" id="IRF2BPL"/>
<dbReference type="HGNC" id="HGNC:14282">
    <property type="gene designation" value="IRF2BPL"/>
</dbReference>
<dbReference type="HPA" id="ENSG00000119669">
    <property type="expression patterns" value="Low tissue specificity"/>
</dbReference>
<dbReference type="MalaCards" id="IRF2BPL"/>
<dbReference type="MIM" id="611720">
    <property type="type" value="gene"/>
</dbReference>
<dbReference type="MIM" id="618088">
    <property type="type" value="phenotype"/>
</dbReference>
<dbReference type="neXtProt" id="NX_Q9H1B7"/>
<dbReference type="OpenTargets" id="ENSG00000119669"/>
<dbReference type="Orphanet" id="597623">
    <property type="disease" value="IRF2BPL-related regressive neurodevelopmental disorder-dystonia-seizures syndrome"/>
</dbReference>
<dbReference type="PharmGKB" id="PA25516"/>
<dbReference type="VEuPathDB" id="HostDB:ENSG00000119669"/>
<dbReference type="eggNOG" id="KOG3579">
    <property type="taxonomic scope" value="Eukaryota"/>
</dbReference>
<dbReference type="GeneTree" id="ENSGT00940000162596"/>
<dbReference type="HOGENOM" id="CLU_019307_1_0_1"/>
<dbReference type="InParanoid" id="Q9H1B7"/>
<dbReference type="OMA" id="GAQMNVP"/>
<dbReference type="OrthoDB" id="45007at2759"/>
<dbReference type="PAN-GO" id="Q9H1B7">
    <property type="GO annotations" value="3 GO annotations based on evolutionary models"/>
</dbReference>
<dbReference type="PhylomeDB" id="Q9H1B7"/>
<dbReference type="TreeFam" id="TF317075"/>
<dbReference type="PathwayCommons" id="Q9H1B7"/>
<dbReference type="SignaLink" id="Q9H1B7"/>
<dbReference type="SIGNOR" id="Q9H1B7"/>
<dbReference type="UniPathway" id="UPA00143"/>
<dbReference type="BioGRID-ORCS" id="64207">
    <property type="hits" value="14 hits in 1165 CRISPR screens"/>
</dbReference>
<dbReference type="ChiTaRS" id="IRF2BPL">
    <property type="organism name" value="human"/>
</dbReference>
<dbReference type="EvolutionaryTrace" id="Q9H1B7"/>
<dbReference type="GeneWiki" id="C14orf4"/>
<dbReference type="GenomeRNAi" id="64207"/>
<dbReference type="Pharos" id="Q9H1B7">
    <property type="development level" value="Tdark"/>
</dbReference>
<dbReference type="PRO" id="PR:Q9H1B7"/>
<dbReference type="Proteomes" id="UP000005640">
    <property type="component" value="Chromosome 14"/>
</dbReference>
<dbReference type="RNAct" id="Q9H1B7">
    <property type="molecule type" value="protein"/>
</dbReference>
<dbReference type="Bgee" id="ENSG00000119669">
    <property type="expression patterns" value="Expressed in germinal epithelium of ovary and 192 other cell types or tissues"/>
</dbReference>
<dbReference type="GO" id="GO:0005615">
    <property type="term" value="C:extracellular space"/>
    <property type="evidence" value="ECO:0007005"/>
    <property type="project" value="UniProtKB"/>
</dbReference>
<dbReference type="GO" id="GO:0005654">
    <property type="term" value="C:nucleoplasm"/>
    <property type="evidence" value="ECO:0000314"/>
    <property type="project" value="HPA"/>
</dbReference>
<dbReference type="GO" id="GO:0005634">
    <property type="term" value="C:nucleus"/>
    <property type="evidence" value="ECO:0000250"/>
    <property type="project" value="ParkinsonsUK-UCL"/>
</dbReference>
<dbReference type="GO" id="GO:0061630">
    <property type="term" value="F:ubiquitin protein ligase activity"/>
    <property type="evidence" value="ECO:0000314"/>
    <property type="project" value="UniProtKB"/>
</dbReference>
<dbReference type="GO" id="GO:0008270">
    <property type="term" value="F:zinc ion binding"/>
    <property type="evidence" value="ECO:0007669"/>
    <property type="project" value="UniProtKB-KW"/>
</dbReference>
<dbReference type="GO" id="GO:0046543">
    <property type="term" value="P:development of secondary female sexual characteristics"/>
    <property type="evidence" value="ECO:0000250"/>
    <property type="project" value="ParkinsonsUK-UCL"/>
</dbReference>
<dbReference type="GO" id="GO:0000122">
    <property type="term" value="P:negative regulation of transcription by RNA polymerase II"/>
    <property type="evidence" value="ECO:0000314"/>
    <property type="project" value="ParkinsonsUK-UCL"/>
</dbReference>
<dbReference type="GO" id="GO:0007399">
    <property type="term" value="P:nervous system development"/>
    <property type="evidence" value="ECO:0000315"/>
    <property type="project" value="UniProtKB"/>
</dbReference>
<dbReference type="GO" id="GO:0045944">
    <property type="term" value="P:positive regulation of transcription by RNA polymerase II"/>
    <property type="evidence" value="ECO:0000314"/>
    <property type="project" value="ParkinsonsUK-UCL"/>
</dbReference>
<dbReference type="GO" id="GO:0016567">
    <property type="term" value="P:protein ubiquitination"/>
    <property type="evidence" value="ECO:0007669"/>
    <property type="project" value="UniProtKB-UniPathway"/>
</dbReference>
<dbReference type="CDD" id="cd16717">
    <property type="entry name" value="vRING-HC_IRF2BPL"/>
    <property type="match status" value="1"/>
</dbReference>
<dbReference type="FunFam" id="1.10.10.1580:FF:000001">
    <property type="entry name" value="interferon regulatory factor 2-binding protein 2"/>
    <property type="match status" value="1"/>
</dbReference>
<dbReference type="Gene3D" id="1.10.10.1580">
    <property type="entry name" value="Interferon regulatory factor 2-binding protein"/>
    <property type="match status" value="1"/>
</dbReference>
<dbReference type="InterPro" id="IPR044882">
    <property type="entry name" value="I2BP1/2_C3HC4-RING_sf"/>
</dbReference>
<dbReference type="InterPro" id="IPR022750">
    <property type="entry name" value="Interferon_reg_fac2-bd1_2_Znf"/>
</dbReference>
<dbReference type="PANTHER" id="PTHR10816:SF14">
    <property type="entry name" value="E3 UBIQUITIN-PROTEIN LIGASE IRF2BPL-RELATED"/>
    <property type="match status" value="1"/>
</dbReference>
<dbReference type="PANTHER" id="PTHR10816">
    <property type="entry name" value="MYELIN TRANSCRIPTION FACTOR 1-RELATED"/>
    <property type="match status" value="1"/>
</dbReference>
<dbReference type="Pfam" id="PF11261">
    <property type="entry name" value="IRF-2BP1_2"/>
    <property type="match status" value="1"/>
</dbReference>
<dbReference type="Pfam" id="PF25457">
    <property type="entry name" value="IRF-2BP1_2_M"/>
    <property type="match status" value="1"/>
</dbReference>
<dbReference type="Pfam" id="PF25454">
    <property type="entry name" value="zf-C3HC4_IRF-2BP1_2"/>
    <property type="match status" value="1"/>
</dbReference>
<dbReference type="SUPFAM" id="SSF57850">
    <property type="entry name" value="RING/U-box"/>
    <property type="match status" value="1"/>
</dbReference>